<reference key="1">
    <citation type="journal article" date="2007" name="Nature">
        <title>Evolution of genes and genomes on the Drosophila phylogeny.</title>
        <authorList>
            <consortium name="Drosophila 12 genomes consortium"/>
        </authorList>
    </citation>
    <scope>NUCLEOTIDE SEQUENCE [LARGE SCALE GENOMIC DNA]</scope>
    <source>
        <strain>Tucson 14030-0811.24</strain>
    </source>
</reference>
<sequence length="449" mass="49153">MSTSSAAVNGNHYEQLHQGRTKMYKSKVDVVLGAQWGDEGKGKVVDMLASEVDIVCRCQGGNNAGHTVVANGTEFDFHLLPSGVVNEKCISVIGNGVVIHLPSLFDELLKNQAKGLSHLENRLIISDRAHLVFDFHQHVDGMQEAEKGGKSLGTTKKGIGPAYSSKATRNGIRVGELLGDFNLFSDKFKSIVATHVRLFPSINVDVDAELARYKDYAEKVRPYVKDTICFLHTALRNGKTILVEGANAAMLDIDFGTYPYVTSSNCSIGGVLTGLGLPPQTIGEVIGVVKAYTTRVGDGPFPTEQLNEVGDLLQTRGFEVGVTTKRKRRCGWLDIPLLKYTSLVNGYTCICITKLDILDTMAEIKVAVGYKRSNGEKLDHFPGTIAELGSIEVEYANLPGWQTSTEHIRNFKELPENAQNYVRFLESELSVPVRWVGVGKGRESIINVH</sequence>
<keyword id="KW-0963">Cytoplasm</keyword>
<keyword id="KW-0342">GTP-binding</keyword>
<keyword id="KW-0436">Ligase</keyword>
<keyword id="KW-0460">Magnesium</keyword>
<keyword id="KW-0479">Metal-binding</keyword>
<keyword id="KW-0547">Nucleotide-binding</keyword>
<keyword id="KW-0658">Purine biosynthesis</keyword>
<keyword id="KW-1185">Reference proteome</keyword>
<name>PURA_DROWI</name>
<comment type="function">
    <text evidence="1">Plays an important role in the de novo pathway and in the salvage pathway of purine nucleotide biosynthesis. Catalyzes the first committed step in the biosynthesis of AMP from IMP (By similarity).</text>
</comment>
<comment type="catalytic activity">
    <reaction evidence="2">
        <text>IMP + L-aspartate + GTP = N(6)-(1,2-dicarboxyethyl)-AMP + GDP + phosphate + 2 H(+)</text>
        <dbReference type="Rhea" id="RHEA:15753"/>
        <dbReference type="ChEBI" id="CHEBI:15378"/>
        <dbReference type="ChEBI" id="CHEBI:29991"/>
        <dbReference type="ChEBI" id="CHEBI:37565"/>
        <dbReference type="ChEBI" id="CHEBI:43474"/>
        <dbReference type="ChEBI" id="CHEBI:57567"/>
        <dbReference type="ChEBI" id="CHEBI:58053"/>
        <dbReference type="ChEBI" id="CHEBI:58189"/>
        <dbReference type="EC" id="6.3.4.4"/>
    </reaction>
</comment>
<comment type="cofactor">
    <cofactor evidence="2">
        <name>Mg(2+)</name>
        <dbReference type="ChEBI" id="CHEBI:18420"/>
    </cofactor>
    <text evidence="2">Binds 1 Mg(2+) ion per subunit.</text>
</comment>
<comment type="pathway">
    <text evidence="2">Purine metabolism; AMP biosynthesis via de novo pathway; AMP from IMP: step 1/2.</text>
</comment>
<comment type="subunit">
    <text evidence="2">Homodimer.</text>
</comment>
<comment type="subcellular location">
    <subcellularLocation>
        <location evidence="2">Cytoplasm</location>
    </subcellularLocation>
</comment>
<comment type="similarity">
    <text evidence="2">Belongs to the adenylosuccinate synthetase family.</text>
</comment>
<organism>
    <name type="scientific">Drosophila willistoni</name>
    <name type="common">Fruit fly</name>
    <dbReference type="NCBI Taxonomy" id="7260"/>
    <lineage>
        <taxon>Eukaryota</taxon>
        <taxon>Metazoa</taxon>
        <taxon>Ecdysozoa</taxon>
        <taxon>Arthropoda</taxon>
        <taxon>Hexapoda</taxon>
        <taxon>Insecta</taxon>
        <taxon>Pterygota</taxon>
        <taxon>Neoptera</taxon>
        <taxon>Endopterygota</taxon>
        <taxon>Diptera</taxon>
        <taxon>Brachycera</taxon>
        <taxon>Muscomorpha</taxon>
        <taxon>Ephydroidea</taxon>
        <taxon>Drosophilidae</taxon>
        <taxon>Drosophila</taxon>
        <taxon>Sophophora</taxon>
    </lineage>
</organism>
<dbReference type="EC" id="6.3.4.4" evidence="2"/>
<dbReference type="EMBL" id="CH964251">
    <property type="protein sequence ID" value="EDW83142.1"/>
    <property type="molecule type" value="Genomic_DNA"/>
</dbReference>
<dbReference type="SMR" id="B4NFS5"/>
<dbReference type="STRING" id="7260.B4NFS5"/>
<dbReference type="EnsemblMetazoa" id="FBtr0253344">
    <property type="protein sequence ID" value="FBpp0251836"/>
    <property type="gene ID" value="FBgn0224670"/>
</dbReference>
<dbReference type="EnsemblMetazoa" id="XM_002072120.4">
    <property type="protein sequence ID" value="XP_002072156.1"/>
    <property type="gene ID" value="LOC6649587"/>
</dbReference>
<dbReference type="GeneID" id="6649587"/>
<dbReference type="KEGG" id="dwi:6649587"/>
<dbReference type="eggNOG" id="KOG1355">
    <property type="taxonomic scope" value="Eukaryota"/>
</dbReference>
<dbReference type="HOGENOM" id="CLU_029848_3_0_1"/>
<dbReference type="OMA" id="QSYVRFL"/>
<dbReference type="OrthoDB" id="10265645at2759"/>
<dbReference type="PhylomeDB" id="B4NFS5"/>
<dbReference type="UniPathway" id="UPA00075">
    <property type="reaction ID" value="UER00335"/>
</dbReference>
<dbReference type="Proteomes" id="UP000007798">
    <property type="component" value="Unassembled WGS sequence"/>
</dbReference>
<dbReference type="GO" id="GO:0005737">
    <property type="term" value="C:cytoplasm"/>
    <property type="evidence" value="ECO:0007669"/>
    <property type="project" value="UniProtKB-SubCell"/>
</dbReference>
<dbReference type="GO" id="GO:0004019">
    <property type="term" value="F:adenylosuccinate synthase activity"/>
    <property type="evidence" value="ECO:0007669"/>
    <property type="project" value="UniProtKB-UniRule"/>
</dbReference>
<dbReference type="GO" id="GO:0005525">
    <property type="term" value="F:GTP binding"/>
    <property type="evidence" value="ECO:0007669"/>
    <property type="project" value="UniProtKB-UniRule"/>
</dbReference>
<dbReference type="GO" id="GO:0000287">
    <property type="term" value="F:magnesium ion binding"/>
    <property type="evidence" value="ECO:0007669"/>
    <property type="project" value="UniProtKB-UniRule"/>
</dbReference>
<dbReference type="GO" id="GO:0044208">
    <property type="term" value="P:'de novo' AMP biosynthetic process"/>
    <property type="evidence" value="ECO:0007669"/>
    <property type="project" value="UniProtKB-UniRule"/>
</dbReference>
<dbReference type="GO" id="GO:0046040">
    <property type="term" value="P:IMP metabolic process"/>
    <property type="evidence" value="ECO:0007669"/>
    <property type="project" value="TreeGrafter"/>
</dbReference>
<dbReference type="CDD" id="cd03108">
    <property type="entry name" value="AdSS"/>
    <property type="match status" value="1"/>
</dbReference>
<dbReference type="FunFam" id="3.90.170.10:FF:000001">
    <property type="entry name" value="Adenylosuccinate synthetase"/>
    <property type="match status" value="1"/>
</dbReference>
<dbReference type="FunFam" id="1.10.300.10:FF:000002">
    <property type="entry name" value="Adenylosuccinate synthetase, chloroplastic"/>
    <property type="match status" value="1"/>
</dbReference>
<dbReference type="Gene3D" id="3.40.440.10">
    <property type="entry name" value="Adenylosuccinate Synthetase, subunit A, domain 1"/>
    <property type="match status" value="1"/>
</dbReference>
<dbReference type="Gene3D" id="1.10.300.10">
    <property type="entry name" value="Adenylosuccinate Synthetase, subunit A, domain 2"/>
    <property type="match status" value="1"/>
</dbReference>
<dbReference type="Gene3D" id="3.90.170.10">
    <property type="entry name" value="Adenylosuccinate Synthetase, subunit A, domain 3"/>
    <property type="match status" value="1"/>
</dbReference>
<dbReference type="HAMAP" id="MF_00011">
    <property type="entry name" value="Adenylosucc_synth"/>
    <property type="match status" value="1"/>
</dbReference>
<dbReference type="InterPro" id="IPR018220">
    <property type="entry name" value="Adenylosuccin_syn_GTP-bd"/>
</dbReference>
<dbReference type="InterPro" id="IPR033128">
    <property type="entry name" value="Adenylosuccin_syn_Lys_AS"/>
</dbReference>
<dbReference type="InterPro" id="IPR042109">
    <property type="entry name" value="Adenylosuccinate_synth_dom1"/>
</dbReference>
<dbReference type="InterPro" id="IPR042110">
    <property type="entry name" value="Adenylosuccinate_synth_dom2"/>
</dbReference>
<dbReference type="InterPro" id="IPR042111">
    <property type="entry name" value="Adenylosuccinate_synth_dom3"/>
</dbReference>
<dbReference type="InterPro" id="IPR001114">
    <property type="entry name" value="Adenylosuccinate_synthetase"/>
</dbReference>
<dbReference type="InterPro" id="IPR027417">
    <property type="entry name" value="P-loop_NTPase"/>
</dbReference>
<dbReference type="NCBIfam" id="NF002223">
    <property type="entry name" value="PRK01117.1"/>
    <property type="match status" value="1"/>
</dbReference>
<dbReference type="NCBIfam" id="TIGR00184">
    <property type="entry name" value="purA"/>
    <property type="match status" value="1"/>
</dbReference>
<dbReference type="PANTHER" id="PTHR11846">
    <property type="entry name" value="ADENYLOSUCCINATE SYNTHETASE"/>
    <property type="match status" value="1"/>
</dbReference>
<dbReference type="PANTHER" id="PTHR11846:SF0">
    <property type="entry name" value="ADENYLOSUCCINATE SYNTHETASE"/>
    <property type="match status" value="1"/>
</dbReference>
<dbReference type="Pfam" id="PF00709">
    <property type="entry name" value="Adenylsucc_synt"/>
    <property type="match status" value="1"/>
</dbReference>
<dbReference type="SMART" id="SM00788">
    <property type="entry name" value="Adenylsucc_synt"/>
    <property type="match status" value="1"/>
</dbReference>
<dbReference type="SUPFAM" id="SSF52540">
    <property type="entry name" value="P-loop containing nucleoside triphosphate hydrolases"/>
    <property type="match status" value="1"/>
</dbReference>
<dbReference type="PROSITE" id="PS01266">
    <property type="entry name" value="ADENYLOSUCCIN_SYN_1"/>
    <property type="match status" value="1"/>
</dbReference>
<dbReference type="PROSITE" id="PS00513">
    <property type="entry name" value="ADENYLOSUCCIN_SYN_2"/>
    <property type="match status" value="1"/>
</dbReference>
<proteinExistence type="inferred from homology"/>
<evidence type="ECO:0000250" key="1"/>
<evidence type="ECO:0000255" key="2">
    <source>
        <dbReference type="HAMAP-Rule" id="MF_03125"/>
    </source>
</evidence>
<gene>
    <name type="ORF">GK22693</name>
</gene>
<feature type="chain" id="PRO_0000399266" description="Adenylosuccinate synthetase">
    <location>
        <begin position="1"/>
        <end position="449"/>
    </location>
</feature>
<feature type="active site" description="Proton acceptor" evidence="2">
    <location>
        <position position="38"/>
    </location>
</feature>
<feature type="active site" description="Proton donor" evidence="2">
    <location>
        <position position="66"/>
    </location>
</feature>
<feature type="binding site" evidence="2">
    <location>
        <begin position="37"/>
        <end position="43"/>
    </location>
    <ligand>
        <name>GTP</name>
        <dbReference type="ChEBI" id="CHEBI:37565"/>
    </ligand>
</feature>
<feature type="binding site" description="in other chain" evidence="2">
    <location>
        <begin position="38"/>
        <end position="41"/>
    </location>
    <ligand>
        <name>IMP</name>
        <dbReference type="ChEBI" id="CHEBI:58053"/>
        <note>ligand shared between dimeric partners</note>
    </ligand>
</feature>
<feature type="binding site" evidence="2">
    <location>
        <position position="38"/>
    </location>
    <ligand>
        <name>Mg(2+)</name>
        <dbReference type="ChEBI" id="CHEBI:18420"/>
    </ligand>
</feature>
<feature type="binding site" description="in other chain" evidence="2">
    <location>
        <begin position="63"/>
        <end position="66"/>
    </location>
    <ligand>
        <name>IMP</name>
        <dbReference type="ChEBI" id="CHEBI:58053"/>
        <note>ligand shared between dimeric partners</note>
    </ligand>
</feature>
<feature type="binding site" evidence="2">
    <location>
        <begin position="65"/>
        <end position="67"/>
    </location>
    <ligand>
        <name>GTP</name>
        <dbReference type="ChEBI" id="CHEBI:37565"/>
    </ligand>
</feature>
<feature type="binding site" evidence="2">
    <location>
        <position position="65"/>
    </location>
    <ligand>
        <name>Mg(2+)</name>
        <dbReference type="ChEBI" id="CHEBI:18420"/>
    </ligand>
</feature>
<feature type="binding site" description="in other chain" evidence="2">
    <location>
        <position position="155"/>
    </location>
    <ligand>
        <name>IMP</name>
        <dbReference type="ChEBI" id="CHEBI:58053"/>
        <note>ligand shared between dimeric partners</note>
    </ligand>
</feature>
<feature type="binding site" evidence="2">
    <location>
        <position position="169"/>
    </location>
    <ligand>
        <name>IMP</name>
        <dbReference type="ChEBI" id="CHEBI:58053"/>
        <note>ligand shared between dimeric partners</note>
    </ligand>
</feature>
<feature type="binding site" description="in other chain" evidence="2">
    <location>
        <position position="247"/>
    </location>
    <ligand>
        <name>IMP</name>
        <dbReference type="ChEBI" id="CHEBI:58053"/>
        <note>ligand shared between dimeric partners</note>
    </ligand>
</feature>
<feature type="binding site" description="in other chain" evidence="2">
    <location>
        <position position="262"/>
    </location>
    <ligand>
        <name>IMP</name>
        <dbReference type="ChEBI" id="CHEBI:58053"/>
        <note>ligand shared between dimeric partners</note>
    </ligand>
</feature>
<feature type="binding site" evidence="2">
    <location>
        <begin position="322"/>
        <end position="328"/>
    </location>
    <ligand>
        <name>substrate</name>
    </ligand>
</feature>
<feature type="binding site" description="in other chain" evidence="2">
    <location>
        <position position="326"/>
    </location>
    <ligand>
        <name>IMP</name>
        <dbReference type="ChEBI" id="CHEBI:58053"/>
        <note>ligand shared between dimeric partners</note>
    </ligand>
</feature>
<feature type="binding site" evidence="2">
    <location>
        <position position="328"/>
    </location>
    <ligand>
        <name>GTP</name>
        <dbReference type="ChEBI" id="CHEBI:37565"/>
    </ligand>
</feature>
<feature type="binding site" evidence="2">
    <location>
        <begin position="354"/>
        <end position="356"/>
    </location>
    <ligand>
        <name>GTP</name>
        <dbReference type="ChEBI" id="CHEBI:37565"/>
    </ligand>
</feature>
<feature type="binding site" evidence="2">
    <location>
        <begin position="437"/>
        <end position="439"/>
    </location>
    <ligand>
        <name>GTP</name>
        <dbReference type="ChEBI" id="CHEBI:37565"/>
    </ligand>
</feature>
<protein>
    <recommendedName>
        <fullName evidence="2">Adenylosuccinate synthetase</fullName>
        <shortName evidence="2">AMPSase</shortName>
        <shortName evidence="2">AdSS</shortName>
        <ecNumber evidence="2">6.3.4.4</ecNumber>
    </recommendedName>
    <alternativeName>
        <fullName evidence="2">IMP--aspartate ligase</fullName>
    </alternativeName>
</protein>
<accession>B4NFS5</accession>